<reference key="1">
    <citation type="submission" date="1996-10" db="EMBL/GenBank/DDBJ databases">
        <authorList>
            <person name="Hatada E."/>
            <person name="Ohmori H."/>
            <person name="Qiao Y."/>
            <person name="Tsuji M."/>
            <person name="Fukuda R."/>
        </authorList>
    </citation>
    <scope>NUCLEOTIDE SEQUENCE [GENOMIC DNA]</scope>
    <source>
        <strain>K12 / W3110 / ATCC 27325 / DSM 5911</strain>
    </source>
</reference>
<reference key="2">
    <citation type="submission" date="1997-01" db="EMBL/GenBank/DDBJ databases">
        <title>Sequence of minutes 4-25 of Escherichia coli.</title>
        <authorList>
            <person name="Chung E."/>
            <person name="Allen E."/>
            <person name="Araujo R."/>
            <person name="Aparicio A.M."/>
            <person name="Davis K."/>
            <person name="Duncan M."/>
            <person name="Federspiel N."/>
            <person name="Hyman R."/>
            <person name="Kalman S."/>
            <person name="Komp C."/>
            <person name="Kurdi O."/>
            <person name="Lew H."/>
            <person name="Lin D."/>
            <person name="Namath A."/>
            <person name="Oefner P."/>
            <person name="Roberts D."/>
            <person name="Schramm S."/>
            <person name="Davis R.W."/>
        </authorList>
    </citation>
    <scope>NUCLEOTIDE SEQUENCE [LARGE SCALE GENOMIC DNA]</scope>
    <source>
        <strain>K12 / MG1655 / ATCC 47076</strain>
    </source>
</reference>
<reference key="3">
    <citation type="journal article" date="1997" name="Science">
        <title>The complete genome sequence of Escherichia coli K-12.</title>
        <authorList>
            <person name="Blattner F.R."/>
            <person name="Plunkett G. III"/>
            <person name="Bloch C.A."/>
            <person name="Perna N.T."/>
            <person name="Burland V."/>
            <person name="Riley M."/>
            <person name="Collado-Vides J."/>
            <person name="Glasner J.D."/>
            <person name="Rode C.K."/>
            <person name="Mayhew G.F."/>
            <person name="Gregor J."/>
            <person name="Davis N.W."/>
            <person name="Kirkpatrick H.A."/>
            <person name="Goeden M.A."/>
            <person name="Rose D.J."/>
            <person name="Mau B."/>
            <person name="Shao Y."/>
        </authorList>
    </citation>
    <scope>NUCLEOTIDE SEQUENCE [LARGE SCALE GENOMIC DNA]</scope>
    <source>
        <strain>K12 / MG1655 / ATCC 47076</strain>
    </source>
</reference>
<reference key="4">
    <citation type="journal article" date="2006" name="Mol. Syst. Biol.">
        <title>Highly accurate genome sequences of Escherichia coli K-12 strains MG1655 and W3110.</title>
        <authorList>
            <person name="Hayashi K."/>
            <person name="Morooka N."/>
            <person name="Yamamoto Y."/>
            <person name="Fujita K."/>
            <person name="Isono K."/>
            <person name="Choi S."/>
            <person name="Ohtsubo E."/>
            <person name="Baba T."/>
            <person name="Wanner B.L."/>
            <person name="Mori H."/>
            <person name="Horiuchi T."/>
        </authorList>
    </citation>
    <scope>NUCLEOTIDE SEQUENCE [LARGE SCALE GENOMIC DNA]</scope>
    <source>
        <strain>K12 / W3110 / ATCC 27325 / DSM 5911</strain>
    </source>
</reference>
<reference key="5">
    <citation type="submission" date="1995-10" db="EMBL/GenBank/DDBJ databases">
        <authorList>
            <person name="Patzer S.I."/>
            <person name="Hantke K."/>
        </authorList>
    </citation>
    <scope>NUCLEOTIDE SEQUENCE [GENOMIC DNA] OF 1-358</scope>
    <source>
        <strain>K12 / MC4100 / ATCC 35695 / DSM 6574</strain>
    </source>
</reference>
<name>YBAE_ECOLI</name>
<organism>
    <name type="scientific">Escherichia coli (strain K12)</name>
    <dbReference type="NCBI Taxonomy" id="83333"/>
    <lineage>
        <taxon>Bacteria</taxon>
        <taxon>Pseudomonadati</taxon>
        <taxon>Pseudomonadota</taxon>
        <taxon>Gammaproteobacteria</taxon>
        <taxon>Enterobacterales</taxon>
        <taxon>Enterobacteriaceae</taxon>
        <taxon>Escherichia</taxon>
    </lineage>
</organism>
<proteinExistence type="predicted"/>
<sequence>MRLLNRLNQYQRLWQPSAGKPQTVTVSELAERCFCSERHVRTLLRQAQEAGWLEWQAQSGRGKRGQLRFLVTPESLRNAMMEQALETGKQQDVLELAQLAPGELRTLLQPFMGGQWQNDTPTLRIPYYRPLEPLQPGFLPGRAEQHLAGQIFSGLTRFDNNTQRPIGDLAHHWETSTDGLRWDFYLRSTLHWHNGDAVKASHLHQRLLMLLQLPALDQLFISVKRIEVTHPQCLTFFLHRPDYWLAHRLASYCSHLAHPQFPLIGTGPFRLTQFTAELVRLESHDYYHLRHPLLKAVEYWITPPLFEKDLGTSCRHPVQITIGKPEELQRVSQVSSGISLGFCYLTLRKSPRLSLWQARKVISIIHQSGLLQTLEVGENLITASHALLPGWTIPHWQVPDEVKLPKTLTLVYHLPIELHTMAERLQATLAAEGCELTIIFHNAKNWDDTTLQAHADLMMGDRLIGEAPEYTLEQWLRCDPLWPHVFDAPAYAHLQSTLDAVQIMPDEENRFNALKAVFSQLMTDATLTPLFNYHYRISAPPGVNGVRLTPRGWFEFTEAWLPAPSQ</sequence>
<accession>P46890</accession>
<accession>P77158</accession>
<accession>Q2MBY1</accession>
<keyword id="KW-1185">Reference proteome</keyword>
<feature type="chain" id="PRO_0000168616" description="Uncharacterized protein YbaE">
    <location>
        <begin position="1"/>
        <end position="566"/>
    </location>
</feature>
<protein>
    <recommendedName>
        <fullName>Uncharacterized protein YbaE</fullName>
    </recommendedName>
</protein>
<gene>
    <name type="primary">ybaE</name>
    <name type="ordered locus">b0445</name>
    <name type="ordered locus">JW0435</name>
</gene>
<dbReference type="EMBL" id="D82943">
    <property type="protein sequence ID" value="BAA11649.1"/>
    <property type="molecule type" value="Genomic_DNA"/>
</dbReference>
<dbReference type="EMBL" id="U82664">
    <property type="protein sequence ID" value="AAB40201.1"/>
    <property type="molecule type" value="Genomic_DNA"/>
</dbReference>
<dbReference type="EMBL" id="U00096">
    <property type="protein sequence ID" value="AAC73548.1"/>
    <property type="molecule type" value="Genomic_DNA"/>
</dbReference>
<dbReference type="EMBL" id="AP009048">
    <property type="protein sequence ID" value="BAE76225.1"/>
    <property type="molecule type" value="Genomic_DNA"/>
</dbReference>
<dbReference type="EMBL" id="Z54355">
    <property type="protein sequence ID" value="CAA91182.1"/>
    <property type="molecule type" value="Genomic_DNA"/>
</dbReference>
<dbReference type="PIR" id="E64774">
    <property type="entry name" value="E64774"/>
</dbReference>
<dbReference type="RefSeq" id="NP_414979.1">
    <property type="nucleotide sequence ID" value="NC_000913.3"/>
</dbReference>
<dbReference type="RefSeq" id="WP_001238234.1">
    <property type="nucleotide sequence ID" value="NZ_SSZK01000009.1"/>
</dbReference>
<dbReference type="SMR" id="P46890"/>
<dbReference type="BioGRID" id="4259529">
    <property type="interactions" value="16"/>
</dbReference>
<dbReference type="FunCoup" id="P46890">
    <property type="interactions" value="28"/>
</dbReference>
<dbReference type="IntAct" id="P46890">
    <property type="interactions" value="4"/>
</dbReference>
<dbReference type="STRING" id="511145.b0445"/>
<dbReference type="PaxDb" id="511145-b0445"/>
<dbReference type="EnsemblBacteria" id="AAC73548">
    <property type="protein sequence ID" value="AAC73548"/>
    <property type="gene ID" value="b0445"/>
</dbReference>
<dbReference type="GeneID" id="949093"/>
<dbReference type="KEGG" id="ecj:JW0435"/>
<dbReference type="KEGG" id="eco:b0445"/>
<dbReference type="KEGG" id="ecoc:C3026_02180"/>
<dbReference type="PATRIC" id="fig|1411691.4.peg.1831"/>
<dbReference type="EchoBASE" id="EB3008"/>
<dbReference type="eggNOG" id="COG4533">
    <property type="taxonomic scope" value="Bacteria"/>
</dbReference>
<dbReference type="HOGENOM" id="CLU_017028_12_2_6"/>
<dbReference type="InParanoid" id="P46890"/>
<dbReference type="OMA" id="EYWITPQ"/>
<dbReference type="OrthoDB" id="5894719at2"/>
<dbReference type="PhylomeDB" id="P46890"/>
<dbReference type="BioCyc" id="EcoCyc:EG13217-MONOMER"/>
<dbReference type="PRO" id="PR:P46890"/>
<dbReference type="Proteomes" id="UP000000625">
    <property type="component" value="Chromosome"/>
</dbReference>
<dbReference type="GO" id="GO:1904680">
    <property type="term" value="F:peptide transmembrane transporter activity"/>
    <property type="evidence" value="ECO:0000318"/>
    <property type="project" value="GO_Central"/>
</dbReference>
<dbReference type="GO" id="GO:0015833">
    <property type="term" value="P:peptide transport"/>
    <property type="evidence" value="ECO:0000318"/>
    <property type="project" value="GO_Central"/>
</dbReference>
<dbReference type="Gene3D" id="3.40.190.10">
    <property type="entry name" value="Periplasmic binding protein-like II"/>
    <property type="match status" value="1"/>
</dbReference>
<dbReference type="InterPro" id="IPR039424">
    <property type="entry name" value="SBP_5"/>
</dbReference>
<dbReference type="InterPro" id="IPR000914">
    <property type="entry name" value="SBP_5_dom"/>
</dbReference>
<dbReference type="InterPro" id="IPR025370">
    <property type="entry name" value="SgrR_HTH_N"/>
</dbReference>
<dbReference type="PANTHER" id="PTHR30290:SF19">
    <property type="entry name" value="ABC TRANSPORTER PERIPLASMIC BINDING PROTEIN"/>
    <property type="match status" value="1"/>
</dbReference>
<dbReference type="PANTHER" id="PTHR30290">
    <property type="entry name" value="PERIPLASMIC BINDING COMPONENT OF ABC TRANSPORTER"/>
    <property type="match status" value="1"/>
</dbReference>
<dbReference type="Pfam" id="PF00496">
    <property type="entry name" value="SBP_bac_5"/>
    <property type="match status" value="1"/>
</dbReference>
<dbReference type="Pfam" id="PF12793">
    <property type="entry name" value="SgrR_N"/>
    <property type="match status" value="1"/>
</dbReference>
<dbReference type="SUPFAM" id="SSF53850">
    <property type="entry name" value="Periplasmic binding protein-like II"/>
    <property type="match status" value="1"/>
</dbReference>